<sequence>MAAPKQAARKPRRRDRKSVPVGQAHIKSTFNNTIISITDPSGAVVSWASGGDVGFKGSRKSTPYAAGMAAESAARKAMEHGVKKVDVFVKGPGSGRETAIRSLQSAGLEVGSITDVTPQAHNGVRPPKRRRV</sequence>
<proteinExistence type="inferred from homology"/>
<protein>
    <recommendedName>
        <fullName evidence="1">Small ribosomal subunit protein uS11</fullName>
    </recommendedName>
    <alternativeName>
        <fullName evidence="3">30S ribosomal protein S11</fullName>
    </alternativeName>
</protein>
<comment type="function">
    <text evidence="1">Located on the platform of the 30S subunit, it bridges several disparate RNA helices of the 16S rRNA. Forms part of the Shine-Dalgarno cleft in the 70S ribosome.</text>
</comment>
<comment type="subunit">
    <text evidence="1">Part of the 30S ribosomal subunit. Interacts with proteins S7 and S18. Binds to IF-3.</text>
</comment>
<comment type="similarity">
    <text evidence="1">Belongs to the universal ribosomal protein uS11 family.</text>
</comment>
<feature type="chain" id="PRO_1000141057" description="Small ribosomal subunit protein uS11">
    <location>
        <begin position="1"/>
        <end position="132"/>
    </location>
</feature>
<feature type="region of interest" description="Disordered" evidence="2">
    <location>
        <begin position="1"/>
        <end position="24"/>
    </location>
</feature>
<feature type="compositionally biased region" description="Basic residues" evidence="2">
    <location>
        <begin position="7"/>
        <end position="16"/>
    </location>
</feature>
<reference key="1">
    <citation type="journal article" date="2008" name="BMC Genomics">
        <title>Comparative genomic analysis of the gut bacterium Bifidobacterium longum reveals loci susceptible to deletion during pure culture growth.</title>
        <authorList>
            <person name="Lee J.H."/>
            <person name="Karamychev V.N."/>
            <person name="Kozyavkin S.A."/>
            <person name="Mills D."/>
            <person name="Pavlov A.R."/>
            <person name="Pavlova N.V."/>
            <person name="Polouchine N.N."/>
            <person name="Richardson P.M."/>
            <person name="Shakhova V.V."/>
            <person name="Slesarev A.I."/>
            <person name="Weimer B."/>
            <person name="O'Sullivan D.J."/>
        </authorList>
    </citation>
    <scope>NUCLEOTIDE SEQUENCE [LARGE SCALE GENOMIC DNA]</scope>
    <source>
        <strain>DJO10A</strain>
    </source>
</reference>
<gene>
    <name evidence="1" type="primary">rpsK</name>
    <name type="ordered locus">BLD_1732</name>
</gene>
<evidence type="ECO:0000255" key="1">
    <source>
        <dbReference type="HAMAP-Rule" id="MF_01310"/>
    </source>
</evidence>
<evidence type="ECO:0000256" key="2">
    <source>
        <dbReference type="SAM" id="MobiDB-lite"/>
    </source>
</evidence>
<evidence type="ECO:0000305" key="3"/>
<dbReference type="EMBL" id="CP000605">
    <property type="protein sequence ID" value="ACD99177.1"/>
    <property type="molecule type" value="Genomic_DNA"/>
</dbReference>
<dbReference type="RefSeq" id="WP_003829907.1">
    <property type="nucleotide sequence ID" value="NZ_AABM02000016.1"/>
</dbReference>
<dbReference type="SMR" id="B3DQD9"/>
<dbReference type="GeneID" id="69578872"/>
<dbReference type="KEGG" id="blj:BLD_1732"/>
<dbReference type="HOGENOM" id="CLU_072439_5_0_11"/>
<dbReference type="Proteomes" id="UP000002419">
    <property type="component" value="Chromosome"/>
</dbReference>
<dbReference type="GO" id="GO:1990904">
    <property type="term" value="C:ribonucleoprotein complex"/>
    <property type="evidence" value="ECO:0007669"/>
    <property type="project" value="UniProtKB-KW"/>
</dbReference>
<dbReference type="GO" id="GO:0005840">
    <property type="term" value="C:ribosome"/>
    <property type="evidence" value="ECO:0007669"/>
    <property type="project" value="UniProtKB-KW"/>
</dbReference>
<dbReference type="GO" id="GO:0019843">
    <property type="term" value="F:rRNA binding"/>
    <property type="evidence" value="ECO:0007669"/>
    <property type="project" value="UniProtKB-UniRule"/>
</dbReference>
<dbReference type="GO" id="GO:0003735">
    <property type="term" value="F:structural constituent of ribosome"/>
    <property type="evidence" value="ECO:0007669"/>
    <property type="project" value="InterPro"/>
</dbReference>
<dbReference type="GO" id="GO:0006412">
    <property type="term" value="P:translation"/>
    <property type="evidence" value="ECO:0007669"/>
    <property type="project" value="UniProtKB-UniRule"/>
</dbReference>
<dbReference type="FunFam" id="3.30.420.80:FF:000001">
    <property type="entry name" value="30S ribosomal protein S11"/>
    <property type="match status" value="1"/>
</dbReference>
<dbReference type="Gene3D" id="3.30.420.80">
    <property type="entry name" value="Ribosomal protein S11"/>
    <property type="match status" value="1"/>
</dbReference>
<dbReference type="HAMAP" id="MF_01310">
    <property type="entry name" value="Ribosomal_uS11"/>
    <property type="match status" value="1"/>
</dbReference>
<dbReference type="InterPro" id="IPR001971">
    <property type="entry name" value="Ribosomal_uS11"/>
</dbReference>
<dbReference type="InterPro" id="IPR019981">
    <property type="entry name" value="Ribosomal_uS11_bac-type"/>
</dbReference>
<dbReference type="InterPro" id="IPR018102">
    <property type="entry name" value="Ribosomal_uS11_CS"/>
</dbReference>
<dbReference type="InterPro" id="IPR036967">
    <property type="entry name" value="Ribosomal_uS11_sf"/>
</dbReference>
<dbReference type="NCBIfam" id="NF003698">
    <property type="entry name" value="PRK05309.1"/>
    <property type="match status" value="1"/>
</dbReference>
<dbReference type="NCBIfam" id="TIGR03632">
    <property type="entry name" value="uS11_bact"/>
    <property type="match status" value="1"/>
</dbReference>
<dbReference type="PANTHER" id="PTHR11759">
    <property type="entry name" value="40S RIBOSOMAL PROTEIN S14/30S RIBOSOMAL PROTEIN S11"/>
    <property type="match status" value="1"/>
</dbReference>
<dbReference type="Pfam" id="PF00411">
    <property type="entry name" value="Ribosomal_S11"/>
    <property type="match status" value="1"/>
</dbReference>
<dbReference type="PIRSF" id="PIRSF002131">
    <property type="entry name" value="Ribosomal_S11"/>
    <property type="match status" value="1"/>
</dbReference>
<dbReference type="SUPFAM" id="SSF53137">
    <property type="entry name" value="Translational machinery components"/>
    <property type="match status" value="1"/>
</dbReference>
<dbReference type="PROSITE" id="PS00054">
    <property type="entry name" value="RIBOSOMAL_S11"/>
    <property type="match status" value="1"/>
</dbReference>
<accession>B3DQD9</accession>
<name>RS11_BIFLD</name>
<keyword id="KW-0687">Ribonucleoprotein</keyword>
<keyword id="KW-0689">Ribosomal protein</keyword>
<keyword id="KW-0694">RNA-binding</keyword>
<keyword id="KW-0699">rRNA-binding</keyword>
<organism>
    <name type="scientific">Bifidobacterium longum (strain DJO10A)</name>
    <dbReference type="NCBI Taxonomy" id="205913"/>
    <lineage>
        <taxon>Bacteria</taxon>
        <taxon>Bacillati</taxon>
        <taxon>Actinomycetota</taxon>
        <taxon>Actinomycetes</taxon>
        <taxon>Bifidobacteriales</taxon>
        <taxon>Bifidobacteriaceae</taxon>
        <taxon>Bifidobacterium</taxon>
    </lineage>
</organism>